<comment type="function">
    <text evidence="1">Uptake of L-rhamnose across the cytoplasmic membrane with the concomitant transport of protons into the cell (symport system).</text>
</comment>
<comment type="catalytic activity">
    <reaction evidence="1">
        <text>L-rhamnopyranose(in) + H(+)(in) = L-rhamnopyranose(out) + H(+)(out)</text>
        <dbReference type="Rhea" id="RHEA:29947"/>
        <dbReference type="ChEBI" id="CHEBI:15378"/>
        <dbReference type="ChEBI" id="CHEBI:62346"/>
    </reaction>
    <physiologicalReaction direction="right-to-left" evidence="1">
        <dbReference type="Rhea" id="RHEA:29949"/>
    </physiologicalReaction>
</comment>
<comment type="subcellular location">
    <subcellularLocation>
        <location evidence="1">Cell inner membrane</location>
        <topology evidence="1">Multi-pass membrane protein</topology>
    </subcellularLocation>
</comment>
<comment type="similarity">
    <text evidence="1">Belongs to the L-rhamnose transporter (TC 2.A.7.6) family.</text>
</comment>
<proteinExistence type="inferred from homology"/>
<organism>
    <name type="scientific">Escherichia coli O6:H1 (strain CFT073 / ATCC 700928 / UPEC)</name>
    <dbReference type="NCBI Taxonomy" id="199310"/>
    <lineage>
        <taxon>Bacteria</taxon>
        <taxon>Pseudomonadati</taxon>
        <taxon>Pseudomonadota</taxon>
        <taxon>Gammaproteobacteria</taxon>
        <taxon>Enterobacterales</taxon>
        <taxon>Enterobacteriaceae</taxon>
        <taxon>Escherichia</taxon>
    </lineage>
</organism>
<accession>Q8FBD6</accession>
<name>RHAT_ECOL6</name>
<dbReference type="EMBL" id="AE014075">
    <property type="protein sequence ID" value="AAN83285.1"/>
    <property type="molecule type" value="Genomic_DNA"/>
</dbReference>
<dbReference type="RefSeq" id="WP_000063507.1">
    <property type="nucleotide sequence ID" value="NZ_CP051263.1"/>
</dbReference>
<dbReference type="STRING" id="199310.c4857"/>
<dbReference type="GeneID" id="75174148"/>
<dbReference type="KEGG" id="ecc:c4857"/>
<dbReference type="eggNOG" id="ENOG502Z7ID">
    <property type="taxonomic scope" value="Bacteria"/>
</dbReference>
<dbReference type="HOGENOM" id="CLU_066437_0_0_6"/>
<dbReference type="BioCyc" id="ECOL199310:C4857-MONOMER"/>
<dbReference type="Proteomes" id="UP000001410">
    <property type="component" value="Chromosome"/>
</dbReference>
<dbReference type="GO" id="GO:0005886">
    <property type="term" value="C:plasma membrane"/>
    <property type="evidence" value="ECO:0007669"/>
    <property type="project" value="UniProtKB-SubCell"/>
</dbReference>
<dbReference type="GO" id="GO:0015153">
    <property type="term" value="F:rhamnose transmembrane transporter activity"/>
    <property type="evidence" value="ECO:0007669"/>
    <property type="project" value="UniProtKB-UniRule"/>
</dbReference>
<dbReference type="GO" id="GO:0015293">
    <property type="term" value="F:symporter activity"/>
    <property type="evidence" value="ECO:0007669"/>
    <property type="project" value="UniProtKB-KW"/>
</dbReference>
<dbReference type="HAMAP" id="MF_01532">
    <property type="entry name" value="RhaT"/>
    <property type="match status" value="1"/>
</dbReference>
<dbReference type="InterPro" id="IPR004673">
    <property type="entry name" value="L-rhamnose-proton_sym_RhaT"/>
</dbReference>
<dbReference type="NCBIfam" id="NF010021">
    <property type="entry name" value="PRK13499.1-1"/>
    <property type="match status" value="1"/>
</dbReference>
<dbReference type="NCBIfam" id="NF010023">
    <property type="entry name" value="PRK13499.1-3"/>
    <property type="match status" value="1"/>
</dbReference>
<dbReference type="NCBIfam" id="TIGR00776">
    <property type="entry name" value="RhaT"/>
    <property type="match status" value="1"/>
</dbReference>
<dbReference type="Pfam" id="PF06379">
    <property type="entry name" value="RhaT"/>
    <property type="match status" value="1"/>
</dbReference>
<sequence>MSNAITMGIFWHLIGAASAACFYAPFKKVKKWSWETMWSVGGIVSWIILPWAISALLLPNFWAYYSSFSLSTLLPVFLFGAMWGIGNINYGLTMRYLGMSMGIGIAIGITLIVGTLMTPIINGNFDVLINTEGGRMTLLGVLVALIGVGIVTRAGQLKERKMGIKAEEFNLKKGLVLAVMCGIFSAGMSFAMNAAKPMHEAAAALGVDPLYVALPSYVVIMGGGAIINLGFCFIRLAKVKDLSLKADFSLAKPLIIHNVLLSALGGLMWYLQFFFYAWGHARIPAQYDYISWMLHMSFYVLCGGIVGLVLKEWNNAGRRPVTVLSLGCVVIIVAANIVGIGMAN</sequence>
<feature type="chain" id="PRO_0000208274" description="L-rhamnose-proton symporter">
    <location>
        <begin position="1"/>
        <end position="344"/>
    </location>
</feature>
<feature type="transmembrane region" description="Helical" evidence="1">
    <location>
        <begin position="4"/>
        <end position="24"/>
    </location>
</feature>
<feature type="transmembrane region" description="Helical" evidence="1">
    <location>
        <begin position="38"/>
        <end position="58"/>
    </location>
</feature>
<feature type="transmembrane region" description="Helical" evidence="1">
    <location>
        <begin position="68"/>
        <end position="88"/>
    </location>
</feature>
<feature type="transmembrane region" description="Helical" evidence="1">
    <location>
        <begin position="101"/>
        <end position="121"/>
    </location>
</feature>
<feature type="transmembrane region" description="Helical" evidence="1">
    <location>
        <begin position="137"/>
        <end position="157"/>
    </location>
</feature>
<feature type="transmembrane region" description="Helical" evidence="1">
    <location>
        <begin position="175"/>
        <end position="195"/>
    </location>
</feature>
<feature type="transmembrane region" description="Helical" evidence="1">
    <location>
        <begin position="214"/>
        <end position="234"/>
    </location>
</feature>
<feature type="transmembrane region" description="Helical" evidence="1">
    <location>
        <begin position="259"/>
        <end position="279"/>
    </location>
</feature>
<feature type="transmembrane region" description="Helical" evidence="1">
    <location>
        <begin position="290"/>
        <end position="310"/>
    </location>
</feature>
<feature type="transmembrane region" description="Helical" evidence="1">
    <location>
        <begin position="323"/>
        <end position="343"/>
    </location>
</feature>
<protein>
    <recommendedName>
        <fullName evidence="1">L-rhamnose-proton symporter</fullName>
    </recommendedName>
    <alternativeName>
        <fullName evidence="1">L-rhamnose-H(+) transport protein</fullName>
    </alternativeName>
</protein>
<reference key="1">
    <citation type="journal article" date="2002" name="Proc. Natl. Acad. Sci. U.S.A.">
        <title>Extensive mosaic structure revealed by the complete genome sequence of uropathogenic Escherichia coli.</title>
        <authorList>
            <person name="Welch R.A."/>
            <person name="Burland V."/>
            <person name="Plunkett G. III"/>
            <person name="Redford P."/>
            <person name="Roesch P."/>
            <person name="Rasko D."/>
            <person name="Buckles E.L."/>
            <person name="Liou S.-R."/>
            <person name="Boutin A."/>
            <person name="Hackett J."/>
            <person name="Stroud D."/>
            <person name="Mayhew G.F."/>
            <person name="Rose D.J."/>
            <person name="Zhou S."/>
            <person name="Schwartz D.C."/>
            <person name="Perna N.T."/>
            <person name="Mobley H.L.T."/>
            <person name="Donnenberg M.S."/>
            <person name="Blattner F.R."/>
        </authorList>
    </citation>
    <scope>NUCLEOTIDE SEQUENCE [LARGE SCALE GENOMIC DNA]</scope>
    <source>
        <strain>CFT073 / ATCC 700928 / UPEC</strain>
    </source>
</reference>
<evidence type="ECO:0000255" key="1">
    <source>
        <dbReference type="HAMAP-Rule" id="MF_01532"/>
    </source>
</evidence>
<gene>
    <name evidence="1" type="primary">rhaT</name>
    <name type="ordered locus">c4857</name>
</gene>
<keyword id="KW-0997">Cell inner membrane</keyword>
<keyword id="KW-1003">Cell membrane</keyword>
<keyword id="KW-0472">Membrane</keyword>
<keyword id="KW-1185">Reference proteome</keyword>
<keyword id="KW-0762">Sugar transport</keyword>
<keyword id="KW-0769">Symport</keyword>
<keyword id="KW-0812">Transmembrane</keyword>
<keyword id="KW-1133">Transmembrane helix</keyword>
<keyword id="KW-0813">Transport</keyword>